<protein>
    <recommendedName>
        <fullName evidence="1">Glutamine--tRNA ligase</fullName>
        <ecNumber evidence="1">6.1.1.18</ecNumber>
    </recommendedName>
    <alternativeName>
        <fullName evidence="1">Glutaminyl-tRNA synthetase</fullName>
        <shortName evidence="1">GlnRS</shortName>
    </alternativeName>
</protein>
<accession>A7MQT2</accession>
<name>SYQ_CROS8</name>
<comment type="catalytic activity">
    <reaction evidence="1">
        <text>tRNA(Gln) + L-glutamine + ATP = L-glutaminyl-tRNA(Gln) + AMP + diphosphate</text>
        <dbReference type="Rhea" id="RHEA:20121"/>
        <dbReference type="Rhea" id="RHEA-COMP:9662"/>
        <dbReference type="Rhea" id="RHEA-COMP:9681"/>
        <dbReference type="ChEBI" id="CHEBI:30616"/>
        <dbReference type="ChEBI" id="CHEBI:33019"/>
        <dbReference type="ChEBI" id="CHEBI:58359"/>
        <dbReference type="ChEBI" id="CHEBI:78442"/>
        <dbReference type="ChEBI" id="CHEBI:78521"/>
        <dbReference type="ChEBI" id="CHEBI:456215"/>
        <dbReference type="EC" id="6.1.1.18"/>
    </reaction>
</comment>
<comment type="subunit">
    <text evidence="1">Monomer.</text>
</comment>
<comment type="subcellular location">
    <subcellularLocation>
        <location evidence="1">Cytoplasm</location>
    </subcellularLocation>
</comment>
<comment type="similarity">
    <text evidence="1">Belongs to the class-I aminoacyl-tRNA synthetase family.</text>
</comment>
<reference key="1">
    <citation type="journal article" date="2010" name="PLoS ONE">
        <title>Genome sequence of Cronobacter sakazakii BAA-894 and comparative genomic hybridization analysis with other Cronobacter species.</title>
        <authorList>
            <person name="Kucerova E."/>
            <person name="Clifton S.W."/>
            <person name="Xia X.Q."/>
            <person name="Long F."/>
            <person name="Porwollik S."/>
            <person name="Fulton L."/>
            <person name="Fronick C."/>
            <person name="Minx P."/>
            <person name="Kyung K."/>
            <person name="Warren W."/>
            <person name="Fulton R."/>
            <person name="Feng D."/>
            <person name="Wollam A."/>
            <person name="Shah N."/>
            <person name="Bhonagiri V."/>
            <person name="Nash W.E."/>
            <person name="Hallsworth-Pepin K."/>
            <person name="Wilson R.K."/>
            <person name="McClelland M."/>
            <person name="Forsythe S.J."/>
        </authorList>
    </citation>
    <scope>NUCLEOTIDE SEQUENCE [LARGE SCALE GENOMIC DNA]</scope>
    <source>
        <strain>ATCC BAA-894</strain>
    </source>
</reference>
<dbReference type="EC" id="6.1.1.18" evidence="1"/>
<dbReference type="EMBL" id="CP000783">
    <property type="protein sequence ID" value="ABU77898.1"/>
    <property type="molecule type" value="Genomic_DNA"/>
</dbReference>
<dbReference type="RefSeq" id="WP_004387180.1">
    <property type="nucleotide sequence ID" value="NC_009778.1"/>
</dbReference>
<dbReference type="SMR" id="A7MQT2"/>
<dbReference type="KEGG" id="esa:ESA_02658"/>
<dbReference type="HOGENOM" id="CLU_001882_2_3_6"/>
<dbReference type="Proteomes" id="UP000000260">
    <property type="component" value="Chromosome"/>
</dbReference>
<dbReference type="GO" id="GO:0005829">
    <property type="term" value="C:cytosol"/>
    <property type="evidence" value="ECO:0007669"/>
    <property type="project" value="TreeGrafter"/>
</dbReference>
<dbReference type="GO" id="GO:0005524">
    <property type="term" value="F:ATP binding"/>
    <property type="evidence" value="ECO:0007669"/>
    <property type="project" value="UniProtKB-UniRule"/>
</dbReference>
<dbReference type="GO" id="GO:0004819">
    <property type="term" value="F:glutamine-tRNA ligase activity"/>
    <property type="evidence" value="ECO:0007669"/>
    <property type="project" value="UniProtKB-UniRule"/>
</dbReference>
<dbReference type="GO" id="GO:0006425">
    <property type="term" value="P:glutaminyl-tRNA aminoacylation"/>
    <property type="evidence" value="ECO:0007669"/>
    <property type="project" value="InterPro"/>
</dbReference>
<dbReference type="GO" id="GO:0006424">
    <property type="term" value="P:glutamyl-tRNA aminoacylation"/>
    <property type="evidence" value="ECO:0007669"/>
    <property type="project" value="UniProtKB-UniRule"/>
</dbReference>
<dbReference type="CDD" id="cd00807">
    <property type="entry name" value="GlnRS_core"/>
    <property type="match status" value="1"/>
</dbReference>
<dbReference type="FunFam" id="1.10.1160.10:FF:000001">
    <property type="entry name" value="Glutamine--tRNA ligase"/>
    <property type="match status" value="1"/>
</dbReference>
<dbReference type="FunFam" id="2.40.240.10:FF:000001">
    <property type="entry name" value="Glutamine--tRNA ligase"/>
    <property type="match status" value="1"/>
</dbReference>
<dbReference type="FunFam" id="2.40.240.10:FF:000003">
    <property type="entry name" value="Glutamine--tRNA ligase"/>
    <property type="match status" value="1"/>
</dbReference>
<dbReference type="FunFam" id="3.90.800.10:FF:000001">
    <property type="entry name" value="Glutamine--tRNA ligase"/>
    <property type="match status" value="1"/>
</dbReference>
<dbReference type="FunFam" id="3.40.50.620:FF:000037">
    <property type="entry name" value="Glutamine--tRNA ligase cytoplasmic"/>
    <property type="match status" value="1"/>
</dbReference>
<dbReference type="Gene3D" id="1.10.1160.10">
    <property type="entry name" value="Glutamyl-trna Synthetase, Domain 2"/>
    <property type="match status" value="1"/>
</dbReference>
<dbReference type="Gene3D" id="3.90.800.10">
    <property type="entry name" value="Glutamyl-tRNA Synthetase, Domain 3"/>
    <property type="match status" value="1"/>
</dbReference>
<dbReference type="Gene3D" id="3.40.50.620">
    <property type="entry name" value="HUPs"/>
    <property type="match status" value="1"/>
</dbReference>
<dbReference type="Gene3D" id="2.40.240.10">
    <property type="entry name" value="Ribosomal Protein L25, Chain P"/>
    <property type="match status" value="2"/>
</dbReference>
<dbReference type="HAMAP" id="MF_00126">
    <property type="entry name" value="Gln_tRNA_synth"/>
    <property type="match status" value="1"/>
</dbReference>
<dbReference type="InterPro" id="IPR001412">
    <property type="entry name" value="aa-tRNA-synth_I_CS"/>
</dbReference>
<dbReference type="InterPro" id="IPR004514">
    <property type="entry name" value="Gln-tRNA-synth"/>
</dbReference>
<dbReference type="InterPro" id="IPR050132">
    <property type="entry name" value="Gln/Glu-tRNA_Ligase"/>
</dbReference>
<dbReference type="InterPro" id="IPR022861">
    <property type="entry name" value="Gln_tRNA_ligase_bac"/>
</dbReference>
<dbReference type="InterPro" id="IPR000924">
    <property type="entry name" value="Glu/Gln-tRNA-synth"/>
</dbReference>
<dbReference type="InterPro" id="IPR020058">
    <property type="entry name" value="Glu/Gln-tRNA-synth_Ib_cat-dom"/>
</dbReference>
<dbReference type="InterPro" id="IPR020059">
    <property type="entry name" value="Glu/Gln-tRNA-synth_Ib_codon-bd"/>
</dbReference>
<dbReference type="InterPro" id="IPR020061">
    <property type="entry name" value="Glu_tRNA_lig_a-bdl"/>
</dbReference>
<dbReference type="InterPro" id="IPR020056">
    <property type="entry name" value="Rbsml_bL25/Gln-tRNA_synth_N"/>
</dbReference>
<dbReference type="InterPro" id="IPR011035">
    <property type="entry name" value="Ribosomal_bL25/Gln-tRNA_synth"/>
</dbReference>
<dbReference type="InterPro" id="IPR014729">
    <property type="entry name" value="Rossmann-like_a/b/a_fold"/>
</dbReference>
<dbReference type="InterPro" id="IPR049437">
    <property type="entry name" value="tRNA-synt_1c_C2"/>
</dbReference>
<dbReference type="NCBIfam" id="TIGR00440">
    <property type="entry name" value="glnS"/>
    <property type="match status" value="1"/>
</dbReference>
<dbReference type="NCBIfam" id="NF011291">
    <property type="entry name" value="PRK14703.1"/>
    <property type="match status" value="1"/>
</dbReference>
<dbReference type="PANTHER" id="PTHR43097:SF5">
    <property type="entry name" value="GLUTAMATE--TRNA LIGASE"/>
    <property type="match status" value="1"/>
</dbReference>
<dbReference type="PANTHER" id="PTHR43097">
    <property type="entry name" value="GLUTAMINE-TRNA LIGASE"/>
    <property type="match status" value="1"/>
</dbReference>
<dbReference type="Pfam" id="PF00749">
    <property type="entry name" value="tRNA-synt_1c"/>
    <property type="match status" value="1"/>
</dbReference>
<dbReference type="Pfam" id="PF03950">
    <property type="entry name" value="tRNA-synt_1c_C"/>
    <property type="match status" value="1"/>
</dbReference>
<dbReference type="Pfam" id="PF20974">
    <property type="entry name" value="tRNA-synt_1c_C2"/>
    <property type="match status" value="1"/>
</dbReference>
<dbReference type="PRINTS" id="PR00987">
    <property type="entry name" value="TRNASYNTHGLU"/>
</dbReference>
<dbReference type="SUPFAM" id="SSF52374">
    <property type="entry name" value="Nucleotidylyl transferase"/>
    <property type="match status" value="1"/>
</dbReference>
<dbReference type="SUPFAM" id="SSF50715">
    <property type="entry name" value="Ribosomal protein L25-like"/>
    <property type="match status" value="1"/>
</dbReference>
<dbReference type="PROSITE" id="PS00178">
    <property type="entry name" value="AA_TRNA_LIGASE_I"/>
    <property type="match status" value="1"/>
</dbReference>
<organism>
    <name type="scientific">Cronobacter sakazakii (strain ATCC BAA-894)</name>
    <name type="common">Enterobacter sakazakii</name>
    <dbReference type="NCBI Taxonomy" id="290339"/>
    <lineage>
        <taxon>Bacteria</taxon>
        <taxon>Pseudomonadati</taxon>
        <taxon>Pseudomonadota</taxon>
        <taxon>Gammaproteobacteria</taxon>
        <taxon>Enterobacterales</taxon>
        <taxon>Enterobacteriaceae</taxon>
        <taxon>Cronobacter</taxon>
    </lineage>
</organism>
<gene>
    <name evidence="1" type="primary">glnS</name>
    <name type="ordered locus">ESA_02658</name>
</gene>
<evidence type="ECO:0000255" key="1">
    <source>
        <dbReference type="HAMAP-Rule" id="MF_00126"/>
    </source>
</evidence>
<feature type="chain" id="PRO_1000016296" description="Glutamine--tRNA ligase">
    <location>
        <begin position="1"/>
        <end position="555"/>
    </location>
</feature>
<feature type="short sequence motif" description="'HIGH' region" evidence="1">
    <location>
        <begin position="34"/>
        <end position="44"/>
    </location>
</feature>
<feature type="short sequence motif" description="'KMSKS' region" evidence="1">
    <location>
        <begin position="268"/>
        <end position="272"/>
    </location>
</feature>
<feature type="binding site" evidence="1">
    <location>
        <begin position="35"/>
        <end position="37"/>
    </location>
    <ligand>
        <name>ATP</name>
        <dbReference type="ChEBI" id="CHEBI:30616"/>
    </ligand>
</feature>
<feature type="binding site" evidence="1">
    <location>
        <begin position="41"/>
        <end position="47"/>
    </location>
    <ligand>
        <name>ATP</name>
        <dbReference type="ChEBI" id="CHEBI:30616"/>
    </ligand>
</feature>
<feature type="binding site" evidence="1">
    <location>
        <position position="67"/>
    </location>
    <ligand>
        <name>L-glutamine</name>
        <dbReference type="ChEBI" id="CHEBI:58359"/>
    </ligand>
</feature>
<feature type="binding site" evidence="1">
    <location>
        <position position="212"/>
    </location>
    <ligand>
        <name>L-glutamine</name>
        <dbReference type="ChEBI" id="CHEBI:58359"/>
    </ligand>
</feature>
<feature type="binding site" evidence="1">
    <location>
        <position position="231"/>
    </location>
    <ligand>
        <name>ATP</name>
        <dbReference type="ChEBI" id="CHEBI:30616"/>
    </ligand>
</feature>
<feature type="binding site" evidence="1">
    <location>
        <begin position="261"/>
        <end position="262"/>
    </location>
    <ligand>
        <name>ATP</name>
        <dbReference type="ChEBI" id="CHEBI:30616"/>
    </ligand>
</feature>
<feature type="binding site" evidence="1">
    <location>
        <begin position="269"/>
        <end position="271"/>
    </location>
    <ligand>
        <name>ATP</name>
        <dbReference type="ChEBI" id="CHEBI:30616"/>
    </ligand>
</feature>
<sequence>MSEAEARPTNFIRQIIDEDLASGKHTTICTRFPPEPNGYLHIGHAKSICLNFGIAQDYHGQCNLRFDDTNPVKEDLEFVESIKNDVQWLGFHWSGDVRYSSDYFDQLYNYAVELINKGLAYVDELSPEQIREYRGTLTAPGKNSPFRDRSVEENLALFEKMRAGGFEEGKACLRAKIDMASPFIVMRDPVLYRIKFAEHHQTGNKWCIYPMYDFTHCISDALEGITHSLCTLEFQDNRRLYDWVLDNITIPVHPRQYEFSRLNLEYTVMSKRKLNLLVTDKHVEGWDDPRMPTISGLRRRGYTAASIREFCKRIGVTKQDNTVEMAALEACIREDLNENAPRAMAVIDPVKLVIENYPQGHSEMVSMPNHPNKPEMGNRDVPFSGEIWIDRADFREEANKQYKRLVLGKEVRLRNAYVIKAERVEKDDAGEITTIYCTYDAETLSKDPADGRKVKGVIHWVSAAHALPVEIRLYDRLFSVPNPGAAEDFLTTINKDSLVIKQGYAEPGLKNAEAGKAWQFEREGYFCLDSRHANGDKLVFNRTVGLRDTWAKIGE</sequence>
<proteinExistence type="inferred from homology"/>
<keyword id="KW-0030">Aminoacyl-tRNA synthetase</keyword>
<keyword id="KW-0067">ATP-binding</keyword>
<keyword id="KW-0963">Cytoplasm</keyword>
<keyword id="KW-0436">Ligase</keyword>
<keyword id="KW-0547">Nucleotide-binding</keyword>
<keyword id="KW-0648">Protein biosynthesis</keyword>
<keyword id="KW-1185">Reference proteome</keyword>